<sequence>MKITELLTKHTIKLNIESKEKENVIDEMVTVLDKAGKLNDRQAYKEAILNRESQSSTGIGEGIAIPHAKTASVINPAIAFGRSKDGVDYESLDGQPAHLVFMIAATEGANNTHLEALSRLSTLLMREEIRKQLLEAESEDAIIDIINQHDKDDDEEEEEEEAAPAPAGKGKILAVTACPTGIAHTFMAADALKEKAKELGVEIKVETNGSSGIKHKLTAQEIEDAPAIIVAADKQVEMERFKGKRVLQVPVTAGIRRPQELIEKAMNQDAPIYQGSGGGSAASNDDEEAKGKSGSGIGNTFYKHLMSGVSNMLPFVVGGGILVAISFFWGIHSADPNDPSYNTFAAALNFIGGDNALKLIVAVLAGFIAMSIADRPGFAPGMVGGFMATQANAGFLGGLIAGFLAGYVVILLKKVFTFIPQSLDGLKPVLIYPLFGIFITGVLMQFVVNTPVAAFMNFLTNWLESLGTGNLVLMGIILGGMMAIDMGGPLNKAAFTFGIAMIDAGNYAPHAAIMAGGMVPPLGIALATTIFRNKFTQRDREAGITCYFMGAAFVTEGAIPFAAADPLRVIPAAVVGAAVAGGLTEFFRVTLPAPHGGVFVAFITNHPMLYLLSIVIGAVVMAIILGIVKKPVTEK</sequence>
<evidence type="ECO:0000250" key="1">
    <source>
        <dbReference type="UniProtKB" id="P20966"/>
    </source>
</evidence>
<evidence type="ECO:0000250" key="2">
    <source>
        <dbReference type="UniProtKB" id="P47308"/>
    </source>
</evidence>
<evidence type="ECO:0000255" key="3">
    <source>
        <dbReference type="PROSITE-ProRule" id="PRU00417"/>
    </source>
</evidence>
<evidence type="ECO:0000255" key="4">
    <source>
        <dbReference type="PROSITE-ProRule" id="PRU00422"/>
    </source>
</evidence>
<evidence type="ECO:0000255" key="5">
    <source>
        <dbReference type="PROSITE-ProRule" id="PRU00427"/>
    </source>
</evidence>
<evidence type="ECO:0000256" key="6">
    <source>
        <dbReference type="SAM" id="MobiDB-lite"/>
    </source>
</evidence>
<evidence type="ECO:0000305" key="7"/>
<evidence type="ECO:0007829" key="8">
    <source>
        <dbReference type="PDB" id="2R4Q"/>
    </source>
</evidence>
<reference key="1">
    <citation type="submission" date="1997-07" db="EMBL/GenBank/DDBJ databases">
        <title>Sequence analysis of the mobA-ampS region of the Bacillus subtilis chromosome.</title>
        <authorList>
            <person name="Caldwell R.M."/>
            <person name="Ferrari E."/>
        </authorList>
    </citation>
    <scope>NUCLEOTIDE SEQUENCE [GENOMIC DNA]</scope>
    <source>
        <strain>168</strain>
    </source>
</reference>
<reference key="2">
    <citation type="journal article" date="1997" name="Nature">
        <title>The complete genome sequence of the Gram-positive bacterium Bacillus subtilis.</title>
        <authorList>
            <person name="Kunst F."/>
            <person name="Ogasawara N."/>
            <person name="Moszer I."/>
            <person name="Albertini A.M."/>
            <person name="Alloni G."/>
            <person name="Azevedo V."/>
            <person name="Bertero M.G."/>
            <person name="Bessieres P."/>
            <person name="Bolotin A."/>
            <person name="Borchert S."/>
            <person name="Borriss R."/>
            <person name="Boursier L."/>
            <person name="Brans A."/>
            <person name="Braun M."/>
            <person name="Brignell S.C."/>
            <person name="Bron S."/>
            <person name="Brouillet S."/>
            <person name="Bruschi C.V."/>
            <person name="Caldwell B."/>
            <person name="Capuano V."/>
            <person name="Carter N.M."/>
            <person name="Choi S.-K."/>
            <person name="Codani J.-J."/>
            <person name="Connerton I.F."/>
            <person name="Cummings N.J."/>
            <person name="Daniel R.A."/>
            <person name="Denizot F."/>
            <person name="Devine K.M."/>
            <person name="Duesterhoeft A."/>
            <person name="Ehrlich S.D."/>
            <person name="Emmerson P.T."/>
            <person name="Entian K.-D."/>
            <person name="Errington J."/>
            <person name="Fabret C."/>
            <person name="Ferrari E."/>
            <person name="Foulger D."/>
            <person name="Fritz C."/>
            <person name="Fujita M."/>
            <person name="Fujita Y."/>
            <person name="Fuma S."/>
            <person name="Galizzi A."/>
            <person name="Galleron N."/>
            <person name="Ghim S.-Y."/>
            <person name="Glaser P."/>
            <person name="Goffeau A."/>
            <person name="Golightly E.J."/>
            <person name="Grandi G."/>
            <person name="Guiseppi G."/>
            <person name="Guy B.J."/>
            <person name="Haga K."/>
            <person name="Haiech J."/>
            <person name="Harwood C.R."/>
            <person name="Henaut A."/>
            <person name="Hilbert H."/>
            <person name="Holsappel S."/>
            <person name="Hosono S."/>
            <person name="Hullo M.-F."/>
            <person name="Itaya M."/>
            <person name="Jones L.-M."/>
            <person name="Joris B."/>
            <person name="Karamata D."/>
            <person name="Kasahara Y."/>
            <person name="Klaerr-Blanchard M."/>
            <person name="Klein C."/>
            <person name="Kobayashi Y."/>
            <person name="Koetter P."/>
            <person name="Koningstein G."/>
            <person name="Krogh S."/>
            <person name="Kumano M."/>
            <person name="Kurita K."/>
            <person name="Lapidus A."/>
            <person name="Lardinois S."/>
            <person name="Lauber J."/>
            <person name="Lazarevic V."/>
            <person name="Lee S.-M."/>
            <person name="Levine A."/>
            <person name="Liu H."/>
            <person name="Masuda S."/>
            <person name="Mauel C."/>
            <person name="Medigue C."/>
            <person name="Medina N."/>
            <person name="Mellado R.P."/>
            <person name="Mizuno M."/>
            <person name="Moestl D."/>
            <person name="Nakai S."/>
            <person name="Noback M."/>
            <person name="Noone D."/>
            <person name="O'Reilly M."/>
            <person name="Ogawa K."/>
            <person name="Ogiwara A."/>
            <person name="Oudega B."/>
            <person name="Park S.-H."/>
            <person name="Parro V."/>
            <person name="Pohl T.M."/>
            <person name="Portetelle D."/>
            <person name="Porwollik S."/>
            <person name="Prescott A.M."/>
            <person name="Presecan E."/>
            <person name="Pujic P."/>
            <person name="Purnelle B."/>
            <person name="Rapoport G."/>
            <person name="Rey M."/>
            <person name="Reynolds S."/>
            <person name="Rieger M."/>
            <person name="Rivolta C."/>
            <person name="Rocha E."/>
            <person name="Roche B."/>
            <person name="Rose M."/>
            <person name="Sadaie Y."/>
            <person name="Sato T."/>
            <person name="Scanlan E."/>
            <person name="Schleich S."/>
            <person name="Schroeter R."/>
            <person name="Scoffone F."/>
            <person name="Sekiguchi J."/>
            <person name="Sekowska A."/>
            <person name="Seror S.J."/>
            <person name="Serror P."/>
            <person name="Shin B.-S."/>
            <person name="Soldo B."/>
            <person name="Sorokin A."/>
            <person name="Tacconi E."/>
            <person name="Takagi T."/>
            <person name="Takahashi H."/>
            <person name="Takemaru K."/>
            <person name="Takeuchi M."/>
            <person name="Tamakoshi A."/>
            <person name="Tanaka T."/>
            <person name="Terpstra P."/>
            <person name="Tognoni A."/>
            <person name="Tosato V."/>
            <person name="Uchiyama S."/>
            <person name="Vandenbol M."/>
            <person name="Vannier F."/>
            <person name="Vassarotti A."/>
            <person name="Viari A."/>
            <person name="Wambutt R."/>
            <person name="Wedler E."/>
            <person name="Wedler H."/>
            <person name="Weitzenegger T."/>
            <person name="Winters P."/>
            <person name="Wipat A."/>
            <person name="Yamamoto H."/>
            <person name="Yamane K."/>
            <person name="Yasumoto K."/>
            <person name="Yata K."/>
            <person name="Yoshida K."/>
            <person name="Yoshikawa H.-F."/>
            <person name="Zumstein E."/>
            <person name="Yoshikawa H."/>
            <person name="Danchin A."/>
        </authorList>
    </citation>
    <scope>NUCLEOTIDE SEQUENCE [LARGE SCALE GENOMIC DNA]</scope>
    <source>
        <strain>168</strain>
    </source>
</reference>
<reference key="3">
    <citation type="submission" date="2007-09" db="PDB data bank">
        <title>The structure of a domain of fruA from Bacillus subtilis.</title>
        <authorList>
            <consortium name="Midwest center for structural genomics (MCSG)"/>
        </authorList>
    </citation>
    <scope>X-RAY CRYSTALLOGRAPHY (1.6 ANGSTROMS) OF 171-273</scope>
</reference>
<organism>
    <name type="scientific">Bacillus subtilis (strain 168)</name>
    <dbReference type="NCBI Taxonomy" id="224308"/>
    <lineage>
        <taxon>Bacteria</taxon>
        <taxon>Bacillati</taxon>
        <taxon>Bacillota</taxon>
        <taxon>Bacilli</taxon>
        <taxon>Bacillales</taxon>
        <taxon>Bacillaceae</taxon>
        <taxon>Bacillus</taxon>
    </lineage>
</organism>
<dbReference type="EC" id="2.7.1.202" evidence="1"/>
<dbReference type="EMBL" id="AF012285">
    <property type="protein sequence ID" value="AAC24915.1"/>
    <property type="molecule type" value="Genomic_DNA"/>
</dbReference>
<dbReference type="EMBL" id="AL009126">
    <property type="protein sequence ID" value="CAB13313.1"/>
    <property type="molecule type" value="Genomic_DNA"/>
</dbReference>
<dbReference type="PIR" id="H69626">
    <property type="entry name" value="H69626"/>
</dbReference>
<dbReference type="RefSeq" id="NP_389323.1">
    <property type="nucleotide sequence ID" value="NC_000964.3"/>
</dbReference>
<dbReference type="RefSeq" id="WP_003232350.1">
    <property type="nucleotide sequence ID" value="NZ_OZ025638.1"/>
</dbReference>
<dbReference type="PDB" id="2R4Q">
    <property type="method" value="X-ray"/>
    <property type="resolution" value="1.60 A"/>
    <property type="chains" value="A=171-273"/>
</dbReference>
<dbReference type="PDBsum" id="2R4Q"/>
<dbReference type="SMR" id="P71012"/>
<dbReference type="FunCoup" id="P71012">
    <property type="interactions" value="69"/>
</dbReference>
<dbReference type="IntAct" id="P71012">
    <property type="interactions" value="39"/>
</dbReference>
<dbReference type="STRING" id="224308.BSU14400"/>
<dbReference type="TCDB" id="4.A.2.1.4">
    <property type="family name" value="the pts fructose-mannitol (fru) family"/>
</dbReference>
<dbReference type="jPOST" id="P71012"/>
<dbReference type="PaxDb" id="224308-BSU14400"/>
<dbReference type="DNASU" id="938757"/>
<dbReference type="EnsemblBacteria" id="CAB13313">
    <property type="protein sequence ID" value="CAB13313"/>
    <property type="gene ID" value="BSU_14400"/>
</dbReference>
<dbReference type="GeneID" id="938757"/>
<dbReference type="KEGG" id="bsu:BSU14400"/>
<dbReference type="PATRIC" id="fig|224308.179.peg.1570"/>
<dbReference type="eggNOG" id="COG1299">
    <property type="taxonomic scope" value="Bacteria"/>
</dbReference>
<dbReference type="eggNOG" id="COG1445">
    <property type="taxonomic scope" value="Bacteria"/>
</dbReference>
<dbReference type="eggNOG" id="COG1762">
    <property type="taxonomic scope" value="Bacteria"/>
</dbReference>
<dbReference type="InParanoid" id="P71012"/>
<dbReference type="OrthoDB" id="9782569at2"/>
<dbReference type="PhylomeDB" id="P71012"/>
<dbReference type="BioCyc" id="BSUB:BSU14400-MONOMER"/>
<dbReference type="EvolutionaryTrace" id="P71012"/>
<dbReference type="Proteomes" id="UP000001570">
    <property type="component" value="Chromosome"/>
</dbReference>
<dbReference type="GO" id="GO:0005886">
    <property type="term" value="C:plasma membrane"/>
    <property type="evidence" value="ECO:0000318"/>
    <property type="project" value="GO_Central"/>
</dbReference>
<dbReference type="GO" id="GO:0005351">
    <property type="term" value="F:carbohydrate:proton symporter activity"/>
    <property type="evidence" value="ECO:0007669"/>
    <property type="project" value="InterPro"/>
</dbReference>
<dbReference type="GO" id="GO:0022877">
    <property type="term" value="F:protein-N(PI)-phosphohistidine-fructose phosphotransferase system transporter activity"/>
    <property type="evidence" value="ECO:0007669"/>
    <property type="project" value="InterPro"/>
</dbReference>
<dbReference type="GO" id="GO:0090563">
    <property type="term" value="F:protein-phosphocysteine-sugar phosphotransferase activity"/>
    <property type="evidence" value="ECO:0000318"/>
    <property type="project" value="GO_Central"/>
</dbReference>
<dbReference type="GO" id="GO:0009401">
    <property type="term" value="P:phosphoenolpyruvate-dependent sugar phosphotransferase system"/>
    <property type="evidence" value="ECO:0000318"/>
    <property type="project" value="GO_Central"/>
</dbReference>
<dbReference type="CDD" id="cd00211">
    <property type="entry name" value="PTS_IIA_fru"/>
    <property type="match status" value="1"/>
</dbReference>
<dbReference type="CDD" id="cd05569">
    <property type="entry name" value="PTS_IIB_fructose"/>
    <property type="match status" value="1"/>
</dbReference>
<dbReference type="FunFam" id="3.40.50.2300:FF:000014">
    <property type="entry name" value="PTS system fructose-like transporter subunit IIB"/>
    <property type="match status" value="1"/>
</dbReference>
<dbReference type="FunFam" id="3.40.930.10:FF:000009">
    <property type="entry name" value="PTS system, fructose specific IIABC component"/>
    <property type="match status" value="1"/>
</dbReference>
<dbReference type="Gene3D" id="3.40.50.2300">
    <property type="match status" value="1"/>
</dbReference>
<dbReference type="Gene3D" id="3.40.930.10">
    <property type="entry name" value="Mannitol-specific EII, Chain A"/>
    <property type="match status" value="1"/>
</dbReference>
<dbReference type="InterPro" id="IPR050864">
    <property type="entry name" value="Bacterial_PTS_Sugar_Transport"/>
</dbReference>
<dbReference type="InterPro" id="IPR016152">
    <property type="entry name" value="PTrfase/Anion_transptr"/>
</dbReference>
<dbReference type="InterPro" id="IPR002178">
    <property type="entry name" value="PTS_EIIA_type-2_dom"/>
</dbReference>
<dbReference type="InterPro" id="IPR036095">
    <property type="entry name" value="PTS_EIIB-like_sf"/>
</dbReference>
<dbReference type="InterPro" id="IPR013011">
    <property type="entry name" value="PTS_EIIB_2"/>
</dbReference>
<dbReference type="InterPro" id="IPR003501">
    <property type="entry name" value="PTS_EIIB_2/3"/>
</dbReference>
<dbReference type="InterPro" id="IPR003352">
    <property type="entry name" value="PTS_EIIC"/>
</dbReference>
<dbReference type="InterPro" id="IPR013014">
    <property type="entry name" value="PTS_EIIC_2"/>
</dbReference>
<dbReference type="InterPro" id="IPR004715">
    <property type="entry name" value="PTS_IIA_fruc"/>
</dbReference>
<dbReference type="InterPro" id="IPR003353">
    <property type="entry name" value="PTS_IIB_fruc"/>
</dbReference>
<dbReference type="InterPro" id="IPR006327">
    <property type="entry name" value="PTS_IIC_fruc"/>
</dbReference>
<dbReference type="NCBIfam" id="TIGR00829">
    <property type="entry name" value="FRU"/>
    <property type="match status" value="1"/>
</dbReference>
<dbReference type="NCBIfam" id="TIGR00848">
    <property type="entry name" value="fruA"/>
    <property type="match status" value="1"/>
</dbReference>
<dbReference type="NCBIfam" id="TIGR01427">
    <property type="entry name" value="PTS_IIC_fructo"/>
    <property type="match status" value="1"/>
</dbReference>
<dbReference type="PANTHER" id="PTHR30505">
    <property type="entry name" value="FRUCTOSE-LIKE PERMEASE"/>
    <property type="match status" value="1"/>
</dbReference>
<dbReference type="PANTHER" id="PTHR30505:SF28">
    <property type="entry name" value="PTS SYSTEM 2-O-ALPHA-MANNOSYL-D-GLYCERATE-SPECIFIC EIIABC COMPONENT"/>
    <property type="match status" value="1"/>
</dbReference>
<dbReference type="Pfam" id="PF00359">
    <property type="entry name" value="PTS_EIIA_2"/>
    <property type="match status" value="1"/>
</dbReference>
<dbReference type="Pfam" id="PF02378">
    <property type="entry name" value="PTS_EIIC"/>
    <property type="match status" value="1"/>
</dbReference>
<dbReference type="Pfam" id="PF02302">
    <property type="entry name" value="PTS_IIB"/>
    <property type="match status" value="1"/>
</dbReference>
<dbReference type="SUPFAM" id="SSF55804">
    <property type="entry name" value="Phoshotransferase/anion transport protein"/>
    <property type="match status" value="1"/>
</dbReference>
<dbReference type="SUPFAM" id="SSF52794">
    <property type="entry name" value="PTS system IIB component-like"/>
    <property type="match status" value="1"/>
</dbReference>
<dbReference type="PROSITE" id="PS51094">
    <property type="entry name" value="PTS_EIIA_TYPE_2"/>
    <property type="match status" value="1"/>
</dbReference>
<dbReference type="PROSITE" id="PS00372">
    <property type="entry name" value="PTS_EIIA_TYPE_2_HIS"/>
    <property type="match status" value="1"/>
</dbReference>
<dbReference type="PROSITE" id="PS51099">
    <property type="entry name" value="PTS_EIIB_TYPE_2"/>
    <property type="match status" value="1"/>
</dbReference>
<dbReference type="PROSITE" id="PS51104">
    <property type="entry name" value="PTS_EIIC_TYPE_2"/>
    <property type="match status" value="1"/>
</dbReference>
<protein>
    <recommendedName>
        <fullName evidence="2">PTS system fructose-specific EIIABC component</fullName>
    </recommendedName>
    <alternativeName>
        <fullName evidence="2">EIIABC-Fru</fullName>
    </alternativeName>
    <domain>
        <recommendedName>
            <fullName evidence="2">PTS system fructose-specific EIIA component</fullName>
        </recommendedName>
        <alternativeName>
            <fullName evidence="2">EII-Fru</fullName>
        </alternativeName>
        <alternativeName>
            <fullName evidence="2">Fructose-specific phosphotransferase enzyme IIA component</fullName>
        </alternativeName>
    </domain>
    <domain>
        <recommendedName>
            <fullName evidence="2">PTS system fructose-specific EIIB component</fullName>
            <ecNumber evidence="1">2.7.1.202</ecNumber>
        </recommendedName>
        <alternativeName>
            <fullName evidence="2">EIII-Fru</fullName>
        </alternativeName>
        <alternativeName>
            <fullName evidence="2">Fructose-specific phosphotransferase enzyme IIB component</fullName>
        </alternativeName>
    </domain>
    <domain>
        <recommendedName>
            <fullName evidence="2">PTS system fructose-specific EIIC component</fullName>
        </recommendedName>
        <alternativeName>
            <fullName evidence="2">Fructose permease IIC component</fullName>
        </alternativeName>
    </domain>
</protein>
<proteinExistence type="evidence at protein level"/>
<accession>P71012</accession>
<accession>Q7BVR6</accession>
<comment type="function">
    <text evidence="1 2">The phosphoenolpyruvate-dependent sugar phosphotransferase system (sugar PTS), a major carbohydrate active transport system, catalyzes the phosphorylation of incoming sugar substrates concomitantly with their translocation across the cell membrane. This system is involved in fructose transport.</text>
</comment>
<comment type="catalytic activity">
    <reaction evidence="1">
        <text>D-fructose(out) + N(pros)-phospho-L-histidyl-[protein] = D-fructose 1-phosphate(in) + L-histidyl-[protein]</text>
        <dbReference type="Rhea" id="RHEA:49252"/>
        <dbReference type="Rhea" id="RHEA-COMP:9745"/>
        <dbReference type="Rhea" id="RHEA-COMP:9746"/>
        <dbReference type="ChEBI" id="CHEBI:29979"/>
        <dbReference type="ChEBI" id="CHEBI:37721"/>
        <dbReference type="ChEBI" id="CHEBI:58674"/>
        <dbReference type="ChEBI" id="CHEBI:64837"/>
        <dbReference type="EC" id="2.7.1.202"/>
    </reaction>
</comment>
<comment type="interaction">
    <interactant intactId="EBI-5242378">
        <id>P71012</id>
    </interactant>
    <interactant intactId="EBI-5242987">
        <id>O34755</id>
        <label>ykoT</label>
    </interactant>
    <organismsDiffer>false</organismsDiffer>
    <experiments>3</experiments>
</comment>
<comment type="subcellular location">
    <subcellularLocation>
        <location evidence="5">Cell membrane</location>
        <topology evidence="5">Multi-pass membrane protein</topology>
    </subcellularLocation>
</comment>
<comment type="domain">
    <text evidence="3">The PTS EIIA type-2 domain is phosphorylated by phospho-HPr on a histidyl residue. Then, it transfers the phosphoryl group to the PTS EIIB type-2 domain.</text>
</comment>
<comment type="domain">
    <text evidence="4">The PTS EIIB type-2 domain is phosphorylated by phospho-EIIA on a cysteinyl residue. Then, it transfers the phosphoryl group to the sugar substrate concomitantly with the sugar uptake processed by the PTS EIIC type-2 domain.</text>
</comment>
<comment type="domain">
    <text evidence="5">The EIIC type-2 domain forms the PTS system translocation channel and contains the specific substrate-binding site.</text>
</comment>
<name>PTF3A_BACSU</name>
<keyword id="KW-0002">3D-structure</keyword>
<keyword id="KW-1003">Cell membrane</keyword>
<keyword id="KW-0472">Membrane</keyword>
<keyword id="KW-0597">Phosphoprotein</keyword>
<keyword id="KW-0598">Phosphotransferase system</keyword>
<keyword id="KW-1185">Reference proteome</keyword>
<keyword id="KW-0762">Sugar transport</keyword>
<keyword id="KW-0808">Transferase</keyword>
<keyword id="KW-0812">Transmembrane</keyword>
<keyword id="KW-1133">Transmembrane helix</keyword>
<keyword id="KW-0813">Transport</keyword>
<feature type="chain" id="PRO_0000360665" description="PTS system fructose-specific EIIABC component">
    <location>
        <begin position="1"/>
        <end position="635"/>
    </location>
</feature>
<feature type="transmembrane region" description="Helical" evidence="5">
    <location>
        <begin position="312"/>
        <end position="332"/>
    </location>
</feature>
<feature type="transmembrane region" description="Helical" evidence="5">
    <location>
        <begin position="350"/>
        <end position="370"/>
    </location>
</feature>
<feature type="transmembrane region" description="Helical" evidence="5">
    <location>
        <begin position="392"/>
        <end position="412"/>
    </location>
</feature>
<feature type="transmembrane region" description="Helical" evidence="5">
    <location>
        <begin position="428"/>
        <end position="448"/>
    </location>
</feature>
<feature type="transmembrane region" description="Helical" evidence="5">
    <location>
        <begin position="470"/>
        <end position="490"/>
    </location>
</feature>
<feature type="transmembrane region" description="Helical" evidence="5">
    <location>
        <begin position="511"/>
        <end position="531"/>
    </location>
</feature>
<feature type="transmembrane region" description="Helical" evidence="5">
    <location>
        <begin position="544"/>
        <end position="564"/>
    </location>
</feature>
<feature type="transmembrane region" description="Helical" evidence="5">
    <location>
        <begin position="569"/>
        <end position="589"/>
    </location>
</feature>
<feature type="transmembrane region" description="Helical" evidence="5">
    <location>
        <begin position="608"/>
        <end position="628"/>
    </location>
</feature>
<feature type="domain" description="PTS EIIA type-2" evidence="3">
    <location>
        <begin position="5"/>
        <end position="149"/>
    </location>
</feature>
<feature type="domain" description="PTS EIIB type-2" evidence="4">
    <location>
        <begin position="172"/>
        <end position="267"/>
    </location>
</feature>
<feature type="domain" description="PTS EIIC type-2" evidence="5">
    <location>
        <begin position="301"/>
        <end position="635"/>
    </location>
</feature>
<feature type="region of interest" description="Disordered" evidence="6">
    <location>
        <begin position="149"/>
        <end position="168"/>
    </location>
</feature>
<feature type="region of interest" description="Disordered" evidence="6">
    <location>
        <begin position="273"/>
        <end position="293"/>
    </location>
</feature>
<feature type="compositionally biased region" description="Acidic residues" evidence="6">
    <location>
        <begin position="152"/>
        <end position="162"/>
    </location>
</feature>
<feature type="active site" description="Tele-phosphohistidine intermediate; for EIIA activity" evidence="3">
    <location>
        <position position="67"/>
    </location>
</feature>
<feature type="active site" description="Phosphocysteine intermediate; for EIIB activity" evidence="7">
    <location>
        <position position="178"/>
    </location>
</feature>
<feature type="modified residue" description="Phosphohistidine; by HPr" evidence="7">
    <location>
        <position position="67"/>
    </location>
</feature>
<feature type="modified residue" description="Phosphocysteine; by EIIA" evidence="4">
    <location>
        <position position="178"/>
    </location>
</feature>
<feature type="strand" evidence="8">
    <location>
        <begin position="172"/>
        <end position="177"/>
    </location>
</feature>
<feature type="helix" evidence="8">
    <location>
        <begin position="185"/>
        <end position="199"/>
    </location>
</feature>
<feature type="strand" evidence="8">
    <location>
        <begin position="203"/>
        <end position="209"/>
    </location>
</feature>
<feature type="strand" evidence="8">
    <location>
        <begin position="212"/>
        <end position="215"/>
    </location>
</feature>
<feature type="helix" evidence="8">
    <location>
        <begin position="219"/>
        <end position="224"/>
    </location>
</feature>
<feature type="strand" evidence="8">
    <location>
        <begin position="228"/>
        <end position="234"/>
    </location>
</feature>
<feature type="helix" evidence="8">
    <location>
        <begin position="239"/>
        <end position="241"/>
    </location>
</feature>
<feature type="strand" evidence="8">
    <location>
        <begin position="244"/>
        <end position="249"/>
    </location>
</feature>
<feature type="helix" evidence="8">
    <location>
        <begin position="251"/>
        <end position="256"/>
    </location>
</feature>
<feature type="helix" evidence="8">
    <location>
        <begin position="258"/>
        <end position="266"/>
    </location>
</feature>
<gene>
    <name type="primary">fruA</name>
    <name type="ordered locus">BSU14400</name>
</gene>